<feature type="chain" id="PRO_0000386096" description="GTPase Obg">
    <location>
        <begin position="1"/>
        <end position="516"/>
    </location>
</feature>
<feature type="domain" description="Obg" evidence="3">
    <location>
        <begin position="4"/>
        <end position="161"/>
    </location>
</feature>
<feature type="domain" description="OBG-type G" evidence="1">
    <location>
        <begin position="162"/>
        <end position="332"/>
    </location>
</feature>
<feature type="domain" description="OCT" evidence="2">
    <location>
        <begin position="351"/>
        <end position="432"/>
    </location>
</feature>
<feature type="region of interest" description="Disordered" evidence="4">
    <location>
        <begin position="466"/>
        <end position="516"/>
    </location>
</feature>
<feature type="compositionally biased region" description="Basic and acidic residues" evidence="4">
    <location>
        <begin position="466"/>
        <end position="491"/>
    </location>
</feature>
<feature type="binding site" evidence="1">
    <location>
        <begin position="168"/>
        <end position="175"/>
    </location>
    <ligand>
        <name>GTP</name>
        <dbReference type="ChEBI" id="CHEBI:37565"/>
    </ligand>
</feature>
<feature type="binding site" evidence="1">
    <location>
        <position position="175"/>
    </location>
    <ligand>
        <name>Mg(2+)</name>
        <dbReference type="ChEBI" id="CHEBI:18420"/>
    </ligand>
</feature>
<feature type="binding site" evidence="1">
    <location>
        <begin position="193"/>
        <end position="197"/>
    </location>
    <ligand>
        <name>GTP</name>
        <dbReference type="ChEBI" id="CHEBI:37565"/>
    </ligand>
</feature>
<feature type="binding site" evidence="1">
    <location>
        <position position="195"/>
    </location>
    <ligand>
        <name>Mg(2+)</name>
        <dbReference type="ChEBI" id="CHEBI:18420"/>
    </ligand>
</feature>
<feature type="binding site" evidence="1">
    <location>
        <begin position="214"/>
        <end position="217"/>
    </location>
    <ligand>
        <name>GTP</name>
        <dbReference type="ChEBI" id="CHEBI:37565"/>
    </ligand>
</feature>
<feature type="binding site" evidence="1">
    <location>
        <begin position="284"/>
        <end position="287"/>
    </location>
    <ligand>
        <name>GTP</name>
        <dbReference type="ChEBI" id="CHEBI:37565"/>
    </ligand>
</feature>
<feature type="binding site" evidence="1">
    <location>
        <begin position="313"/>
        <end position="315"/>
    </location>
    <ligand>
        <name>GTP</name>
        <dbReference type="ChEBI" id="CHEBI:37565"/>
    </ligand>
</feature>
<proteinExistence type="inferred from homology"/>
<sequence>MAVPTFVDRVTLHVSAGRGGNGVASVHREKFKPLGGPDGGNGGPGGSVTLRVDPDVTTLLDYHHSPKRRAEHGGHGAGAHRNGAHGADLVLPVPDGTVVSDPQGHLLADLVGPGTELVVAQGGRGGLGNAALASAKRKAPGFALLGEPGDELEIVLELKVVADIGLVGFPSAGKSSLIAAISRARPKIADYPFTTLVPNLGVVSAGDTTFTVADVPGLIEGASEGRGLGHDFLRHIERCAAIVHVVDTASIEPGRNPVDDLDVIENELTRYGGLEDRPRLVALNKVDVPDGRDIAGFVVDELRQRGLRVFEVSAASGEGLRELTFAMAGIVEAARAAKPAVEATRIVLRPPSVDGSDAFTVTATPDGWRVRGEKPERWVRQTDFSNDEAVGFLADRLNRLGVETRLAEMGAEEGDAVLIGDPENAVVFDFKPGVDAAAEILSRRGEDQRFDESRPAARRRRAIEEAMADRAEGETRADVARRLDRPAREDGGAYGPQSYEIGGRDDPDWAEEDLGE</sequence>
<keyword id="KW-0963">Cytoplasm</keyword>
<keyword id="KW-0342">GTP-binding</keyword>
<keyword id="KW-0378">Hydrolase</keyword>
<keyword id="KW-0460">Magnesium</keyword>
<keyword id="KW-0479">Metal-binding</keyword>
<keyword id="KW-0547">Nucleotide-binding</keyword>
<keyword id="KW-1185">Reference proteome</keyword>
<gene>
    <name evidence="1" type="primary">obg</name>
    <name type="ordered locus">Noca_3449</name>
</gene>
<reference key="1">
    <citation type="submission" date="2006-12" db="EMBL/GenBank/DDBJ databases">
        <title>Complete sequence of chromosome 1 of Nocardioides sp. JS614.</title>
        <authorList>
            <person name="Copeland A."/>
            <person name="Lucas S."/>
            <person name="Lapidus A."/>
            <person name="Barry K."/>
            <person name="Detter J.C."/>
            <person name="Glavina del Rio T."/>
            <person name="Hammon N."/>
            <person name="Israni S."/>
            <person name="Dalin E."/>
            <person name="Tice H."/>
            <person name="Pitluck S."/>
            <person name="Thompson L.S."/>
            <person name="Brettin T."/>
            <person name="Bruce D."/>
            <person name="Han C."/>
            <person name="Tapia R."/>
            <person name="Schmutz J."/>
            <person name="Larimer F."/>
            <person name="Land M."/>
            <person name="Hauser L."/>
            <person name="Kyrpides N."/>
            <person name="Kim E."/>
            <person name="Mattes T."/>
            <person name="Gossett J."/>
            <person name="Richardson P."/>
        </authorList>
    </citation>
    <scope>NUCLEOTIDE SEQUENCE [LARGE SCALE GENOMIC DNA]</scope>
    <source>
        <strain>ATCC BAA-499 / JS614</strain>
    </source>
</reference>
<evidence type="ECO:0000255" key="1">
    <source>
        <dbReference type="HAMAP-Rule" id="MF_01454"/>
    </source>
</evidence>
<evidence type="ECO:0000255" key="2">
    <source>
        <dbReference type="PROSITE-ProRule" id="PRU01229"/>
    </source>
</evidence>
<evidence type="ECO:0000255" key="3">
    <source>
        <dbReference type="PROSITE-ProRule" id="PRU01231"/>
    </source>
</evidence>
<evidence type="ECO:0000256" key="4">
    <source>
        <dbReference type="SAM" id="MobiDB-lite"/>
    </source>
</evidence>
<protein>
    <recommendedName>
        <fullName evidence="1">GTPase Obg</fullName>
        <ecNumber evidence="1">3.6.5.-</ecNumber>
    </recommendedName>
    <alternativeName>
        <fullName evidence="1">GTP-binding protein Obg</fullName>
    </alternativeName>
</protein>
<comment type="function">
    <text evidence="1">An essential GTPase which binds GTP, GDP and possibly (p)ppGpp with moderate affinity, with high nucleotide exchange rates and a fairly low GTP hydrolysis rate. Plays a role in control of the cell cycle, stress response, ribosome biogenesis and in those bacteria that undergo differentiation, in morphogenesis control.</text>
</comment>
<comment type="cofactor">
    <cofactor evidence="1">
        <name>Mg(2+)</name>
        <dbReference type="ChEBI" id="CHEBI:18420"/>
    </cofactor>
</comment>
<comment type="subunit">
    <text evidence="1">Monomer.</text>
</comment>
<comment type="subcellular location">
    <subcellularLocation>
        <location evidence="1">Cytoplasm</location>
    </subcellularLocation>
</comment>
<comment type="similarity">
    <text evidence="1">Belongs to the TRAFAC class OBG-HflX-like GTPase superfamily. OBG GTPase family.</text>
</comment>
<organism>
    <name type="scientific">Nocardioides sp. (strain ATCC BAA-499 / JS614)</name>
    <dbReference type="NCBI Taxonomy" id="196162"/>
    <lineage>
        <taxon>Bacteria</taxon>
        <taxon>Bacillati</taxon>
        <taxon>Actinomycetota</taxon>
        <taxon>Actinomycetes</taxon>
        <taxon>Propionibacteriales</taxon>
        <taxon>Nocardioidaceae</taxon>
        <taxon>Nocardioides</taxon>
    </lineage>
</organism>
<accession>A1SMB4</accession>
<dbReference type="EC" id="3.6.5.-" evidence="1"/>
<dbReference type="EMBL" id="CP000509">
    <property type="protein sequence ID" value="ABL82949.1"/>
    <property type="molecule type" value="Genomic_DNA"/>
</dbReference>
<dbReference type="SMR" id="A1SMB4"/>
<dbReference type="STRING" id="196162.Noca_3449"/>
<dbReference type="KEGG" id="nca:Noca_3449"/>
<dbReference type="eggNOG" id="COG0536">
    <property type="taxonomic scope" value="Bacteria"/>
</dbReference>
<dbReference type="HOGENOM" id="CLU_011747_2_1_11"/>
<dbReference type="OrthoDB" id="9807318at2"/>
<dbReference type="Proteomes" id="UP000000640">
    <property type="component" value="Chromosome"/>
</dbReference>
<dbReference type="GO" id="GO:0005737">
    <property type="term" value="C:cytoplasm"/>
    <property type="evidence" value="ECO:0007669"/>
    <property type="project" value="UniProtKB-SubCell"/>
</dbReference>
<dbReference type="GO" id="GO:0005525">
    <property type="term" value="F:GTP binding"/>
    <property type="evidence" value="ECO:0007669"/>
    <property type="project" value="UniProtKB-UniRule"/>
</dbReference>
<dbReference type="GO" id="GO:0003924">
    <property type="term" value="F:GTPase activity"/>
    <property type="evidence" value="ECO:0007669"/>
    <property type="project" value="UniProtKB-UniRule"/>
</dbReference>
<dbReference type="GO" id="GO:0000287">
    <property type="term" value="F:magnesium ion binding"/>
    <property type="evidence" value="ECO:0007669"/>
    <property type="project" value="InterPro"/>
</dbReference>
<dbReference type="GO" id="GO:0042254">
    <property type="term" value="P:ribosome biogenesis"/>
    <property type="evidence" value="ECO:0007669"/>
    <property type="project" value="UniProtKB-UniRule"/>
</dbReference>
<dbReference type="CDD" id="cd01898">
    <property type="entry name" value="Obg"/>
    <property type="match status" value="1"/>
</dbReference>
<dbReference type="FunFam" id="2.70.210.12:FF:000001">
    <property type="entry name" value="GTPase Obg"/>
    <property type="match status" value="1"/>
</dbReference>
<dbReference type="Gene3D" id="3.30.300.350">
    <property type="entry name" value="GTP-binding protein OBG, C-terminal domain"/>
    <property type="match status" value="1"/>
</dbReference>
<dbReference type="Gene3D" id="2.70.210.12">
    <property type="entry name" value="GTP1/OBG domain"/>
    <property type="match status" value="1"/>
</dbReference>
<dbReference type="Gene3D" id="3.40.50.300">
    <property type="entry name" value="P-loop containing nucleotide triphosphate hydrolases"/>
    <property type="match status" value="1"/>
</dbReference>
<dbReference type="HAMAP" id="MF_01454">
    <property type="entry name" value="GTPase_Obg"/>
    <property type="match status" value="1"/>
</dbReference>
<dbReference type="InterPro" id="IPR031167">
    <property type="entry name" value="G_OBG"/>
</dbReference>
<dbReference type="InterPro" id="IPR006073">
    <property type="entry name" value="GTP-bd"/>
</dbReference>
<dbReference type="InterPro" id="IPR014100">
    <property type="entry name" value="GTP-bd_Obg/CgtA"/>
</dbReference>
<dbReference type="InterPro" id="IPR036346">
    <property type="entry name" value="GTP-bd_prot_GTP1/OBG_C_sf"/>
</dbReference>
<dbReference type="InterPro" id="IPR006074">
    <property type="entry name" value="GTP1-OBG_CS"/>
</dbReference>
<dbReference type="InterPro" id="IPR006169">
    <property type="entry name" value="GTP1_OBG_dom"/>
</dbReference>
<dbReference type="InterPro" id="IPR036726">
    <property type="entry name" value="GTP1_OBG_dom_sf"/>
</dbReference>
<dbReference type="InterPro" id="IPR045086">
    <property type="entry name" value="OBG_GTPase"/>
</dbReference>
<dbReference type="InterPro" id="IPR015349">
    <property type="entry name" value="OCT_dom"/>
</dbReference>
<dbReference type="InterPro" id="IPR027417">
    <property type="entry name" value="P-loop_NTPase"/>
</dbReference>
<dbReference type="NCBIfam" id="TIGR02729">
    <property type="entry name" value="Obg_CgtA"/>
    <property type="match status" value="1"/>
</dbReference>
<dbReference type="NCBIfam" id="TIGR03595">
    <property type="entry name" value="Obg_CgtA_exten"/>
    <property type="match status" value="1"/>
</dbReference>
<dbReference type="NCBIfam" id="NF008954">
    <property type="entry name" value="PRK12296.1"/>
    <property type="match status" value="1"/>
</dbReference>
<dbReference type="NCBIfam" id="NF008955">
    <property type="entry name" value="PRK12297.1"/>
    <property type="match status" value="1"/>
</dbReference>
<dbReference type="NCBIfam" id="NF008956">
    <property type="entry name" value="PRK12299.1"/>
    <property type="match status" value="1"/>
</dbReference>
<dbReference type="PANTHER" id="PTHR11702">
    <property type="entry name" value="DEVELOPMENTALLY REGULATED GTP-BINDING PROTEIN-RELATED"/>
    <property type="match status" value="1"/>
</dbReference>
<dbReference type="PANTHER" id="PTHR11702:SF31">
    <property type="entry name" value="MITOCHONDRIAL RIBOSOME-ASSOCIATED GTPASE 2"/>
    <property type="match status" value="1"/>
</dbReference>
<dbReference type="Pfam" id="PF09269">
    <property type="entry name" value="DUF1967"/>
    <property type="match status" value="1"/>
</dbReference>
<dbReference type="Pfam" id="PF01018">
    <property type="entry name" value="GTP1_OBG"/>
    <property type="match status" value="1"/>
</dbReference>
<dbReference type="Pfam" id="PF01926">
    <property type="entry name" value="MMR_HSR1"/>
    <property type="match status" value="1"/>
</dbReference>
<dbReference type="PRINTS" id="PR00326">
    <property type="entry name" value="GTP1OBG"/>
</dbReference>
<dbReference type="SUPFAM" id="SSF102741">
    <property type="entry name" value="Obg GTP-binding protein C-terminal domain"/>
    <property type="match status" value="1"/>
</dbReference>
<dbReference type="SUPFAM" id="SSF82051">
    <property type="entry name" value="Obg GTP-binding protein N-terminal domain"/>
    <property type="match status" value="1"/>
</dbReference>
<dbReference type="SUPFAM" id="SSF52540">
    <property type="entry name" value="P-loop containing nucleoside triphosphate hydrolases"/>
    <property type="match status" value="1"/>
</dbReference>
<dbReference type="PROSITE" id="PS51710">
    <property type="entry name" value="G_OBG"/>
    <property type="match status" value="1"/>
</dbReference>
<dbReference type="PROSITE" id="PS00905">
    <property type="entry name" value="GTP1_OBG"/>
    <property type="match status" value="1"/>
</dbReference>
<dbReference type="PROSITE" id="PS51883">
    <property type="entry name" value="OBG"/>
    <property type="match status" value="1"/>
</dbReference>
<dbReference type="PROSITE" id="PS51881">
    <property type="entry name" value="OCT"/>
    <property type="match status" value="1"/>
</dbReference>
<name>OBG_NOCSJ</name>